<protein>
    <recommendedName>
        <fullName evidence="1">L-aspartate dehydrogenase</fullName>
        <ecNumber evidence="1">1.4.1.21</ecNumber>
    </recommendedName>
</protein>
<name>ASPD_BURP1</name>
<feature type="chain" id="PRO_1000067298" description="L-aspartate dehydrogenase">
    <location>
        <begin position="1"/>
        <end position="271"/>
    </location>
</feature>
<feature type="active site" evidence="1">
    <location>
        <position position="224"/>
    </location>
</feature>
<feature type="binding site" evidence="1">
    <location>
        <position position="128"/>
    </location>
    <ligand>
        <name>NAD(+)</name>
        <dbReference type="ChEBI" id="CHEBI:57540"/>
    </ligand>
</feature>
<feature type="binding site" evidence="1">
    <location>
        <position position="194"/>
    </location>
    <ligand>
        <name>NAD(+)</name>
        <dbReference type="ChEBI" id="CHEBI:57540"/>
    </ligand>
</feature>
<sequence>MRNAHAPVDVAMIGFGAIGAAVYRAVEHDAALRVAHVIVPEHQCDAVRGALGERVDVVSSVDALACRPQFALECAGHGALVDHVVPLLKAGTDCAVASIGALSDLALLDALSNAADAGGATLTLLSGAIGGIDALAAARQGGLDEVRYIGRKPPLGWLGTPAEAICDLRAMAAEQTIFEGSARDAAQLYPRNANVAATIALAGVGLDATRVCLIADPAVTRNVHRIVARGAFGEMSIEMSGKPLPDNPKTSALTAFSAIRALRNRASHCVI</sequence>
<comment type="function">
    <text evidence="1">Specifically catalyzes the NAD or NADP-dependent dehydrogenation of L-aspartate to iminoaspartate.</text>
</comment>
<comment type="catalytic activity">
    <reaction evidence="1">
        <text>L-aspartate + NADP(+) + H2O = oxaloacetate + NH4(+) + NADPH + H(+)</text>
        <dbReference type="Rhea" id="RHEA:11784"/>
        <dbReference type="ChEBI" id="CHEBI:15377"/>
        <dbReference type="ChEBI" id="CHEBI:15378"/>
        <dbReference type="ChEBI" id="CHEBI:16452"/>
        <dbReference type="ChEBI" id="CHEBI:28938"/>
        <dbReference type="ChEBI" id="CHEBI:29991"/>
        <dbReference type="ChEBI" id="CHEBI:57783"/>
        <dbReference type="ChEBI" id="CHEBI:58349"/>
        <dbReference type="EC" id="1.4.1.21"/>
    </reaction>
</comment>
<comment type="catalytic activity">
    <reaction evidence="1">
        <text>L-aspartate + NAD(+) + H2O = oxaloacetate + NH4(+) + NADH + H(+)</text>
        <dbReference type="Rhea" id="RHEA:11788"/>
        <dbReference type="ChEBI" id="CHEBI:15377"/>
        <dbReference type="ChEBI" id="CHEBI:15378"/>
        <dbReference type="ChEBI" id="CHEBI:16452"/>
        <dbReference type="ChEBI" id="CHEBI:28938"/>
        <dbReference type="ChEBI" id="CHEBI:29991"/>
        <dbReference type="ChEBI" id="CHEBI:57540"/>
        <dbReference type="ChEBI" id="CHEBI:57945"/>
        <dbReference type="EC" id="1.4.1.21"/>
    </reaction>
</comment>
<comment type="pathway">
    <text evidence="1">Cofactor biosynthesis; NAD(+) biosynthesis; iminoaspartate from L-aspartate (dehydrogenase route): step 1/1.</text>
</comment>
<comment type="miscellaneous">
    <text evidence="1">The iminoaspartate product is unstable in aqueous solution and can decompose to oxaloacetate and ammonia.</text>
</comment>
<comment type="similarity">
    <text evidence="1">Belongs to the L-aspartate dehydrogenase family.</text>
</comment>
<evidence type="ECO:0000255" key="1">
    <source>
        <dbReference type="HAMAP-Rule" id="MF_01265"/>
    </source>
</evidence>
<dbReference type="EC" id="1.4.1.21" evidence="1"/>
<dbReference type="EMBL" id="CP000125">
    <property type="protein sequence ID" value="ABA53762.1"/>
    <property type="molecule type" value="Genomic_DNA"/>
</dbReference>
<dbReference type="RefSeq" id="WP_004528162.1">
    <property type="nucleotide sequence ID" value="NC_007435.1"/>
</dbReference>
<dbReference type="SMR" id="Q3JFK2"/>
<dbReference type="EnsemblBacteria" id="ABA53762">
    <property type="protein sequence ID" value="ABA53762"/>
    <property type="gene ID" value="BURPS1710b_A2501"/>
</dbReference>
<dbReference type="KEGG" id="bpm:BURPS1710b_A2501"/>
<dbReference type="HOGENOM" id="CLU_089550_0_0_4"/>
<dbReference type="UniPathway" id="UPA00253">
    <property type="reaction ID" value="UER00456"/>
</dbReference>
<dbReference type="Proteomes" id="UP000002700">
    <property type="component" value="Chromosome II"/>
</dbReference>
<dbReference type="GO" id="GO:0033735">
    <property type="term" value="F:aspartate dehydrogenase activity"/>
    <property type="evidence" value="ECO:0007669"/>
    <property type="project" value="UniProtKB-EC"/>
</dbReference>
<dbReference type="GO" id="GO:0051287">
    <property type="term" value="F:NAD binding"/>
    <property type="evidence" value="ECO:0007669"/>
    <property type="project" value="UniProtKB-UniRule"/>
</dbReference>
<dbReference type="GO" id="GO:0050661">
    <property type="term" value="F:NADP binding"/>
    <property type="evidence" value="ECO:0007669"/>
    <property type="project" value="UniProtKB-UniRule"/>
</dbReference>
<dbReference type="GO" id="GO:0016639">
    <property type="term" value="F:oxidoreductase activity, acting on the CH-NH2 group of donors, NAD or NADP as acceptor"/>
    <property type="evidence" value="ECO:0007669"/>
    <property type="project" value="UniProtKB-UniRule"/>
</dbReference>
<dbReference type="GO" id="GO:0009435">
    <property type="term" value="P:NAD biosynthetic process"/>
    <property type="evidence" value="ECO:0007669"/>
    <property type="project" value="UniProtKB-UniRule"/>
</dbReference>
<dbReference type="Gene3D" id="3.30.360.10">
    <property type="entry name" value="Dihydrodipicolinate Reductase, domain 2"/>
    <property type="match status" value="1"/>
</dbReference>
<dbReference type="Gene3D" id="3.40.50.720">
    <property type="entry name" value="NAD(P)-binding Rossmann-like Domain"/>
    <property type="match status" value="1"/>
</dbReference>
<dbReference type="HAMAP" id="MF_01265">
    <property type="entry name" value="NadX"/>
    <property type="match status" value="1"/>
</dbReference>
<dbReference type="InterPro" id="IPR005106">
    <property type="entry name" value="Asp/hSer_DH_NAD-bd"/>
</dbReference>
<dbReference type="InterPro" id="IPR002811">
    <property type="entry name" value="Asp_DH"/>
</dbReference>
<dbReference type="InterPro" id="IPR020626">
    <property type="entry name" value="Asp_DH_prok"/>
</dbReference>
<dbReference type="InterPro" id="IPR011182">
    <property type="entry name" value="L-Asp_DH"/>
</dbReference>
<dbReference type="InterPro" id="IPR036291">
    <property type="entry name" value="NAD(P)-bd_dom_sf"/>
</dbReference>
<dbReference type="NCBIfam" id="NF009826">
    <property type="entry name" value="PRK13303.1-1"/>
    <property type="match status" value="1"/>
</dbReference>
<dbReference type="NCBIfam" id="NF009827">
    <property type="entry name" value="PRK13303.1-2"/>
    <property type="match status" value="1"/>
</dbReference>
<dbReference type="NCBIfam" id="NF009828">
    <property type="entry name" value="PRK13303.1-3"/>
    <property type="match status" value="1"/>
</dbReference>
<dbReference type="PANTHER" id="PTHR31873:SF6">
    <property type="entry name" value="ASPARTATE DEHYDROGENASE DOMAIN-CONTAINING PROTEIN"/>
    <property type="match status" value="1"/>
</dbReference>
<dbReference type="PANTHER" id="PTHR31873">
    <property type="entry name" value="L-ASPARTATE DEHYDROGENASE-RELATED"/>
    <property type="match status" value="1"/>
</dbReference>
<dbReference type="Pfam" id="PF01958">
    <property type="entry name" value="Asp_DH_C"/>
    <property type="match status" value="1"/>
</dbReference>
<dbReference type="Pfam" id="PF03447">
    <property type="entry name" value="NAD_binding_3"/>
    <property type="match status" value="1"/>
</dbReference>
<dbReference type="PIRSF" id="PIRSF005227">
    <property type="entry name" value="Asp_dh_NAD_syn"/>
    <property type="match status" value="1"/>
</dbReference>
<dbReference type="SUPFAM" id="SSF55347">
    <property type="entry name" value="Glyceraldehyde-3-phosphate dehydrogenase-like, C-terminal domain"/>
    <property type="match status" value="1"/>
</dbReference>
<dbReference type="SUPFAM" id="SSF51735">
    <property type="entry name" value="NAD(P)-binding Rossmann-fold domains"/>
    <property type="match status" value="1"/>
</dbReference>
<keyword id="KW-0520">NAD</keyword>
<keyword id="KW-0521">NADP</keyword>
<keyword id="KW-0560">Oxidoreductase</keyword>
<keyword id="KW-0662">Pyridine nucleotide biosynthesis</keyword>
<gene>
    <name evidence="1" type="primary">nadX</name>
    <name type="ordered locus">BURPS1710b_A2501</name>
</gene>
<accession>Q3JFK2</accession>
<reference key="1">
    <citation type="journal article" date="2010" name="Genome Biol. Evol.">
        <title>Continuing evolution of Burkholderia mallei through genome reduction and large-scale rearrangements.</title>
        <authorList>
            <person name="Losada L."/>
            <person name="Ronning C.M."/>
            <person name="DeShazer D."/>
            <person name="Woods D."/>
            <person name="Fedorova N."/>
            <person name="Kim H.S."/>
            <person name="Shabalina S.A."/>
            <person name="Pearson T.R."/>
            <person name="Brinkac L."/>
            <person name="Tan P."/>
            <person name="Nandi T."/>
            <person name="Crabtree J."/>
            <person name="Badger J."/>
            <person name="Beckstrom-Sternberg S."/>
            <person name="Saqib M."/>
            <person name="Schutzer S.E."/>
            <person name="Keim P."/>
            <person name="Nierman W.C."/>
        </authorList>
    </citation>
    <scope>NUCLEOTIDE SEQUENCE [LARGE SCALE GENOMIC DNA]</scope>
    <source>
        <strain>1710b</strain>
    </source>
</reference>
<organism>
    <name type="scientific">Burkholderia pseudomallei (strain 1710b)</name>
    <dbReference type="NCBI Taxonomy" id="320372"/>
    <lineage>
        <taxon>Bacteria</taxon>
        <taxon>Pseudomonadati</taxon>
        <taxon>Pseudomonadota</taxon>
        <taxon>Betaproteobacteria</taxon>
        <taxon>Burkholderiales</taxon>
        <taxon>Burkholderiaceae</taxon>
        <taxon>Burkholderia</taxon>
        <taxon>pseudomallei group</taxon>
    </lineage>
</organism>
<proteinExistence type="inferred from homology"/>